<dbReference type="EMBL" id="AL157959">
    <property type="protein sequence ID" value="CAM08553.1"/>
    <property type="molecule type" value="Genomic_DNA"/>
</dbReference>
<dbReference type="RefSeq" id="WP_002217171.1">
    <property type="nucleotide sequence ID" value="NC_003116.1"/>
</dbReference>
<dbReference type="SMR" id="P67535"/>
<dbReference type="EnsemblBacteria" id="CAM08553">
    <property type="protein sequence ID" value="CAM08553"/>
    <property type="gene ID" value="NMA1380"/>
</dbReference>
<dbReference type="KEGG" id="nma:NMA1380"/>
<dbReference type="HOGENOM" id="CLU_161438_1_2_4"/>
<dbReference type="Proteomes" id="UP000000626">
    <property type="component" value="Chromosome"/>
</dbReference>
<dbReference type="Gene3D" id="3.30.70.260">
    <property type="match status" value="1"/>
</dbReference>
<dbReference type="HAMAP" id="MF_00659">
    <property type="entry name" value="UPF0250"/>
    <property type="match status" value="1"/>
</dbReference>
<dbReference type="InterPro" id="IPR007454">
    <property type="entry name" value="UPF0250_YbeD-like"/>
</dbReference>
<dbReference type="InterPro" id="IPR027471">
    <property type="entry name" value="YbeD-like_sf"/>
</dbReference>
<dbReference type="PANTHER" id="PTHR38036">
    <property type="entry name" value="UPF0250 PROTEIN YBED"/>
    <property type="match status" value="1"/>
</dbReference>
<dbReference type="PANTHER" id="PTHR38036:SF1">
    <property type="entry name" value="UPF0250 PROTEIN YBED"/>
    <property type="match status" value="1"/>
</dbReference>
<dbReference type="Pfam" id="PF04359">
    <property type="entry name" value="DUF493"/>
    <property type="match status" value="1"/>
</dbReference>
<dbReference type="SUPFAM" id="SSF117991">
    <property type="entry name" value="YbeD/HP0495-like"/>
    <property type="match status" value="1"/>
</dbReference>
<sequence>MTEQKNKTSLIEFPCTFPLKVMGAVHPEFEQAVLDTVRLHAPDTQAHHITTRPSSKGNYTGATVQVKVENQEQLDNIYRALTSHELVKVVL</sequence>
<reference key="1">
    <citation type="journal article" date="2000" name="Nature">
        <title>Complete DNA sequence of a serogroup A strain of Neisseria meningitidis Z2491.</title>
        <authorList>
            <person name="Parkhill J."/>
            <person name="Achtman M."/>
            <person name="James K.D."/>
            <person name="Bentley S.D."/>
            <person name="Churcher C.M."/>
            <person name="Klee S.R."/>
            <person name="Morelli G."/>
            <person name="Basham D."/>
            <person name="Brown D."/>
            <person name="Chillingworth T."/>
            <person name="Davies R.M."/>
            <person name="Davis P."/>
            <person name="Devlin K."/>
            <person name="Feltwell T."/>
            <person name="Hamlin N."/>
            <person name="Holroyd S."/>
            <person name="Jagels K."/>
            <person name="Leather S."/>
            <person name="Moule S."/>
            <person name="Mungall K.L."/>
            <person name="Quail M.A."/>
            <person name="Rajandream M.A."/>
            <person name="Rutherford K.M."/>
            <person name="Simmonds M."/>
            <person name="Skelton J."/>
            <person name="Whitehead S."/>
            <person name="Spratt B.G."/>
            <person name="Barrell B.G."/>
        </authorList>
    </citation>
    <scope>NUCLEOTIDE SEQUENCE [LARGE SCALE GENOMIC DNA]</scope>
    <source>
        <strain>DSM 15465 / Z2491</strain>
    </source>
</reference>
<name>Y1380_NEIMA</name>
<accession>P67535</accession>
<accession>A1IS05</accession>
<accession>Q9JRI4</accession>
<evidence type="ECO:0000255" key="1">
    <source>
        <dbReference type="HAMAP-Rule" id="MF_00659"/>
    </source>
</evidence>
<organism>
    <name type="scientific">Neisseria meningitidis serogroup A / serotype 4A (strain DSM 15465 / Z2491)</name>
    <dbReference type="NCBI Taxonomy" id="122587"/>
    <lineage>
        <taxon>Bacteria</taxon>
        <taxon>Pseudomonadati</taxon>
        <taxon>Pseudomonadota</taxon>
        <taxon>Betaproteobacteria</taxon>
        <taxon>Neisseriales</taxon>
        <taxon>Neisseriaceae</taxon>
        <taxon>Neisseria</taxon>
    </lineage>
</organism>
<protein>
    <recommendedName>
        <fullName evidence="1">UPF0250 protein NMA1380</fullName>
    </recommendedName>
</protein>
<gene>
    <name type="ordered locus">NMA1380</name>
</gene>
<comment type="similarity">
    <text evidence="1">Belongs to the UPF0250 family.</text>
</comment>
<feature type="chain" id="PRO_0000209301" description="UPF0250 protein NMA1380">
    <location>
        <begin position="1"/>
        <end position="91"/>
    </location>
</feature>
<proteinExistence type="inferred from homology"/>